<sequence>MSELSFDAPVWHHGKALRKGYTTGSCATAAAKVAALMVLRQHLIHQVSIVTPSGVTLCLNVESPHIEGQQAIAAIRKDGGDDVDATHGMLIFARVTLNDSGEITLTGGEGIGTVTRKGIGLPLGSAAINRTPRHTIESAVREAIGPARGADVEIFAPEGEVRAQKTYNSRLGILGGISIIGTTGIVTPMSEESWKRSLSLELEIKRASGLTRVILVPGNHGERFVREQMGVDTQAVVTMSNFVGYMIEEAVRLGFCQIVLVGHPGKLIKIAAGIFHTHSHIADARMETLVAHLALLGAPLELLTLVSDCDTTEAAMEHIEAYGFGHIYNHLARRICLRVMQMLRFTKTQPVCDAILFSFDNHILGSNRPVDEIAKELQC</sequence>
<feature type="chain" id="PRO_1000133745" description="Cobalt-precorrin-5B C(1)-methyltransferase">
    <location>
        <begin position="1"/>
        <end position="379"/>
    </location>
</feature>
<keyword id="KW-0169">Cobalamin biosynthesis</keyword>
<keyword id="KW-0489">Methyltransferase</keyword>
<keyword id="KW-0949">S-adenosyl-L-methionine</keyword>
<keyword id="KW-0808">Transferase</keyword>
<accession>B4T8Y4</accession>
<reference key="1">
    <citation type="journal article" date="2011" name="J. Bacteriol.">
        <title>Comparative genomics of 28 Salmonella enterica isolates: evidence for CRISPR-mediated adaptive sublineage evolution.</title>
        <authorList>
            <person name="Fricke W.F."/>
            <person name="Mammel M.K."/>
            <person name="McDermott P.F."/>
            <person name="Tartera C."/>
            <person name="White D.G."/>
            <person name="Leclerc J.E."/>
            <person name="Ravel J."/>
            <person name="Cebula T.A."/>
        </authorList>
    </citation>
    <scope>NUCLEOTIDE SEQUENCE [LARGE SCALE GENOMIC DNA]</scope>
    <source>
        <strain>SL476</strain>
    </source>
</reference>
<protein>
    <recommendedName>
        <fullName evidence="1">Cobalt-precorrin-5B C(1)-methyltransferase</fullName>
        <ecNumber evidence="1">2.1.1.195</ecNumber>
    </recommendedName>
    <alternativeName>
        <fullName evidence="1">Cobalt-precorrin-6A synthase</fullName>
    </alternativeName>
</protein>
<organism>
    <name type="scientific">Salmonella heidelberg (strain SL476)</name>
    <dbReference type="NCBI Taxonomy" id="454169"/>
    <lineage>
        <taxon>Bacteria</taxon>
        <taxon>Pseudomonadati</taxon>
        <taxon>Pseudomonadota</taxon>
        <taxon>Gammaproteobacteria</taxon>
        <taxon>Enterobacterales</taxon>
        <taxon>Enterobacteriaceae</taxon>
        <taxon>Salmonella</taxon>
    </lineage>
</organism>
<gene>
    <name evidence="1" type="primary">cbiD</name>
    <name type="ordered locus">SeHA_C2254</name>
</gene>
<name>CBID_SALHS</name>
<comment type="function">
    <text evidence="1">Catalyzes the methylation of C-1 in cobalt-precorrin-5B to form cobalt-precorrin-6A.</text>
</comment>
<comment type="catalytic activity">
    <reaction evidence="1">
        <text>Co-precorrin-5B + S-adenosyl-L-methionine = Co-precorrin-6A + S-adenosyl-L-homocysteine</text>
        <dbReference type="Rhea" id="RHEA:26285"/>
        <dbReference type="ChEBI" id="CHEBI:57856"/>
        <dbReference type="ChEBI" id="CHEBI:59789"/>
        <dbReference type="ChEBI" id="CHEBI:60063"/>
        <dbReference type="ChEBI" id="CHEBI:60064"/>
        <dbReference type="EC" id="2.1.1.195"/>
    </reaction>
</comment>
<comment type="pathway">
    <text evidence="1">Cofactor biosynthesis; adenosylcobalamin biosynthesis; cob(II)yrinate a,c-diamide from sirohydrochlorin (anaerobic route): step 6/10.</text>
</comment>
<comment type="similarity">
    <text evidence="1">Belongs to the CbiD family.</text>
</comment>
<evidence type="ECO:0000255" key="1">
    <source>
        <dbReference type="HAMAP-Rule" id="MF_00787"/>
    </source>
</evidence>
<proteinExistence type="inferred from homology"/>
<dbReference type="EC" id="2.1.1.195" evidence="1"/>
<dbReference type="EMBL" id="CP001120">
    <property type="protein sequence ID" value="ACF69640.1"/>
    <property type="molecule type" value="Genomic_DNA"/>
</dbReference>
<dbReference type="RefSeq" id="WP_001292911.1">
    <property type="nucleotide sequence ID" value="NC_011083.1"/>
</dbReference>
<dbReference type="SMR" id="B4T8Y4"/>
<dbReference type="KEGG" id="seh:SeHA_C2254"/>
<dbReference type="HOGENOM" id="CLU_041273_1_0_6"/>
<dbReference type="UniPathway" id="UPA00148">
    <property type="reaction ID" value="UER00227"/>
</dbReference>
<dbReference type="Proteomes" id="UP000001866">
    <property type="component" value="Chromosome"/>
</dbReference>
<dbReference type="GO" id="GO:0043780">
    <property type="term" value="F:cobalt-precorrin-5B C1-methyltransferase activity"/>
    <property type="evidence" value="ECO:0007669"/>
    <property type="project" value="RHEA"/>
</dbReference>
<dbReference type="GO" id="GO:0019251">
    <property type="term" value="P:anaerobic cobalamin biosynthetic process"/>
    <property type="evidence" value="ECO:0007669"/>
    <property type="project" value="UniProtKB-UniRule"/>
</dbReference>
<dbReference type="GO" id="GO:0032259">
    <property type="term" value="P:methylation"/>
    <property type="evidence" value="ECO:0007669"/>
    <property type="project" value="UniProtKB-KW"/>
</dbReference>
<dbReference type="Gene3D" id="3.30.2110.10">
    <property type="entry name" value="CbiD-like"/>
    <property type="match status" value="1"/>
</dbReference>
<dbReference type="HAMAP" id="MF_00787">
    <property type="entry name" value="CbiD"/>
    <property type="match status" value="1"/>
</dbReference>
<dbReference type="InterPro" id="IPR002748">
    <property type="entry name" value="CbiD"/>
</dbReference>
<dbReference type="InterPro" id="IPR036074">
    <property type="entry name" value="CbiD_sf"/>
</dbReference>
<dbReference type="NCBIfam" id="TIGR00312">
    <property type="entry name" value="cbiD"/>
    <property type="match status" value="1"/>
</dbReference>
<dbReference type="PANTHER" id="PTHR35863">
    <property type="entry name" value="COBALT-PRECORRIN-5B C(1)-METHYLTRANSFERASE"/>
    <property type="match status" value="1"/>
</dbReference>
<dbReference type="PANTHER" id="PTHR35863:SF1">
    <property type="entry name" value="COBALT-PRECORRIN-5B C(1)-METHYLTRANSFERASE"/>
    <property type="match status" value="1"/>
</dbReference>
<dbReference type="Pfam" id="PF01888">
    <property type="entry name" value="CbiD"/>
    <property type="match status" value="1"/>
</dbReference>
<dbReference type="PIRSF" id="PIRSF026782">
    <property type="entry name" value="CbiD"/>
    <property type="match status" value="1"/>
</dbReference>
<dbReference type="SUPFAM" id="SSF111342">
    <property type="entry name" value="CbiD-like"/>
    <property type="match status" value="1"/>
</dbReference>